<dbReference type="EC" id="2.8.4.3" evidence="1"/>
<dbReference type="EMBL" id="BX571856">
    <property type="protein sequence ID" value="CAG40270.1"/>
    <property type="molecule type" value="Genomic_DNA"/>
</dbReference>
<dbReference type="RefSeq" id="WP_001001521.1">
    <property type="nucleotide sequence ID" value="NC_002952.2"/>
</dbReference>
<dbReference type="SMR" id="Q6GHE3"/>
<dbReference type="KEGG" id="sar:SAR1268"/>
<dbReference type="HOGENOM" id="CLU_018697_2_0_9"/>
<dbReference type="Proteomes" id="UP000000596">
    <property type="component" value="Chromosome"/>
</dbReference>
<dbReference type="GO" id="GO:0005829">
    <property type="term" value="C:cytosol"/>
    <property type="evidence" value="ECO:0007669"/>
    <property type="project" value="TreeGrafter"/>
</dbReference>
<dbReference type="GO" id="GO:0051539">
    <property type="term" value="F:4 iron, 4 sulfur cluster binding"/>
    <property type="evidence" value="ECO:0007669"/>
    <property type="project" value="UniProtKB-UniRule"/>
</dbReference>
<dbReference type="GO" id="GO:0046872">
    <property type="term" value="F:metal ion binding"/>
    <property type="evidence" value="ECO:0007669"/>
    <property type="project" value="UniProtKB-KW"/>
</dbReference>
<dbReference type="GO" id="GO:0035597">
    <property type="term" value="F:N6-isopentenyladenosine methylthiotransferase activity"/>
    <property type="evidence" value="ECO:0007669"/>
    <property type="project" value="TreeGrafter"/>
</dbReference>
<dbReference type="CDD" id="cd01335">
    <property type="entry name" value="Radical_SAM"/>
    <property type="match status" value="1"/>
</dbReference>
<dbReference type="FunFam" id="3.40.50.12160:FF:000006">
    <property type="entry name" value="tRNA-2-methylthio-N(6)-dimethylallyladenosine synthase"/>
    <property type="match status" value="1"/>
</dbReference>
<dbReference type="FunFam" id="3.80.30.20:FF:000001">
    <property type="entry name" value="tRNA-2-methylthio-N(6)-dimethylallyladenosine synthase 2"/>
    <property type="match status" value="1"/>
</dbReference>
<dbReference type="Gene3D" id="3.40.50.12160">
    <property type="entry name" value="Methylthiotransferase, N-terminal domain"/>
    <property type="match status" value="1"/>
</dbReference>
<dbReference type="Gene3D" id="3.80.30.20">
    <property type="entry name" value="tm_1862 like domain"/>
    <property type="match status" value="1"/>
</dbReference>
<dbReference type="HAMAP" id="MF_01864">
    <property type="entry name" value="tRNA_metthiotr_MiaB"/>
    <property type="match status" value="1"/>
</dbReference>
<dbReference type="InterPro" id="IPR006638">
    <property type="entry name" value="Elp3/MiaA/NifB-like_rSAM"/>
</dbReference>
<dbReference type="InterPro" id="IPR005839">
    <property type="entry name" value="Methylthiotransferase"/>
</dbReference>
<dbReference type="InterPro" id="IPR020612">
    <property type="entry name" value="Methylthiotransferase_CS"/>
</dbReference>
<dbReference type="InterPro" id="IPR013848">
    <property type="entry name" value="Methylthiotransferase_N"/>
</dbReference>
<dbReference type="InterPro" id="IPR038135">
    <property type="entry name" value="Methylthiotransferase_N_sf"/>
</dbReference>
<dbReference type="InterPro" id="IPR006463">
    <property type="entry name" value="MiaB_methiolase"/>
</dbReference>
<dbReference type="InterPro" id="IPR007197">
    <property type="entry name" value="rSAM"/>
</dbReference>
<dbReference type="InterPro" id="IPR023404">
    <property type="entry name" value="rSAM_horseshoe"/>
</dbReference>
<dbReference type="InterPro" id="IPR002792">
    <property type="entry name" value="TRAM_dom"/>
</dbReference>
<dbReference type="NCBIfam" id="TIGR01574">
    <property type="entry name" value="miaB-methiolase"/>
    <property type="match status" value="1"/>
</dbReference>
<dbReference type="NCBIfam" id="TIGR00089">
    <property type="entry name" value="MiaB/RimO family radical SAM methylthiotransferase"/>
    <property type="match status" value="1"/>
</dbReference>
<dbReference type="PANTHER" id="PTHR43020">
    <property type="entry name" value="CDK5 REGULATORY SUBUNIT-ASSOCIATED PROTEIN 1"/>
    <property type="match status" value="1"/>
</dbReference>
<dbReference type="PANTHER" id="PTHR43020:SF2">
    <property type="entry name" value="MITOCHONDRIAL TRNA METHYLTHIOTRANSFERASE CDK5RAP1"/>
    <property type="match status" value="1"/>
</dbReference>
<dbReference type="Pfam" id="PF04055">
    <property type="entry name" value="Radical_SAM"/>
    <property type="match status" value="1"/>
</dbReference>
<dbReference type="Pfam" id="PF01938">
    <property type="entry name" value="TRAM"/>
    <property type="match status" value="1"/>
</dbReference>
<dbReference type="Pfam" id="PF00919">
    <property type="entry name" value="UPF0004"/>
    <property type="match status" value="1"/>
</dbReference>
<dbReference type="SFLD" id="SFLDF00273">
    <property type="entry name" value="(dimethylallyl)adenosine_tRNA"/>
    <property type="match status" value="1"/>
</dbReference>
<dbReference type="SFLD" id="SFLDG01082">
    <property type="entry name" value="B12-binding_domain_containing"/>
    <property type="match status" value="1"/>
</dbReference>
<dbReference type="SFLD" id="SFLDG01061">
    <property type="entry name" value="methylthiotransferase"/>
    <property type="match status" value="1"/>
</dbReference>
<dbReference type="SMART" id="SM00729">
    <property type="entry name" value="Elp3"/>
    <property type="match status" value="1"/>
</dbReference>
<dbReference type="SUPFAM" id="SSF102114">
    <property type="entry name" value="Radical SAM enzymes"/>
    <property type="match status" value="1"/>
</dbReference>
<dbReference type="PROSITE" id="PS51449">
    <property type="entry name" value="MTTASE_N"/>
    <property type="match status" value="1"/>
</dbReference>
<dbReference type="PROSITE" id="PS01278">
    <property type="entry name" value="MTTASE_RADICAL"/>
    <property type="match status" value="1"/>
</dbReference>
<dbReference type="PROSITE" id="PS51918">
    <property type="entry name" value="RADICAL_SAM"/>
    <property type="match status" value="1"/>
</dbReference>
<dbReference type="PROSITE" id="PS50926">
    <property type="entry name" value="TRAM"/>
    <property type="match status" value="1"/>
</dbReference>
<reference key="1">
    <citation type="journal article" date="2004" name="Proc. Natl. Acad. Sci. U.S.A.">
        <title>Complete genomes of two clinical Staphylococcus aureus strains: evidence for the rapid evolution of virulence and drug resistance.</title>
        <authorList>
            <person name="Holden M.T.G."/>
            <person name="Feil E.J."/>
            <person name="Lindsay J.A."/>
            <person name="Peacock S.J."/>
            <person name="Day N.P.J."/>
            <person name="Enright M.C."/>
            <person name="Foster T.J."/>
            <person name="Moore C.E."/>
            <person name="Hurst L."/>
            <person name="Atkin R."/>
            <person name="Barron A."/>
            <person name="Bason N."/>
            <person name="Bentley S.D."/>
            <person name="Chillingworth C."/>
            <person name="Chillingworth T."/>
            <person name="Churcher C."/>
            <person name="Clark L."/>
            <person name="Corton C."/>
            <person name="Cronin A."/>
            <person name="Doggett J."/>
            <person name="Dowd L."/>
            <person name="Feltwell T."/>
            <person name="Hance Z."/>
            <person name="Harris B."/>
            <person name="Hauser H."/>
            <person name="Holroyd S."/>
            <person name="Jagels K."/>
            <person name="James K.D."/>
            <person name="Lennard N."/>
            <person name="Line A."/>
            <person name="Mayes R."/>
            <person name="Moule S."/>
            <person name="Mungall K."/>
            <person name="Ormond D."/>
            <person name="Quail M.A."/>
            <person name="Rabbinowitsch E."/>
            <person name="Rutherford K.M."/>
            <person name="Sanders M."/>
            <person name="Sharp S."/>
            <person name="Simmonds M."/>
            <person name="Stevens K."/>
            <person name="Whitehead S."/>
            <person name="Barrell B.G."/>
            <person name="Spratt B.G."/>
            <person name="Parkhill J."/>
        </authorList>
    </citation>
    <scope>NUCLEOTIDE SEQUENCE [LARGE SCALE GENOMIC DNA]</scope>
    <source>
        <strain>MRSA252</strain>
    </source>
</reference>
<keyword id="KW-0004">4Fe-4S</keyword>
<keyword id="KW-0963">Cytoplasm</keyword>
<keyword id="KW-0408">Iron</keyword>
<keyword id="KW-0411">Iron-sulfur</keyword>
<keyword id="KW-0479">Metal-binding</keyword>
<keyword id="KW-0949">S-adenosyl-L-methionine</keyword>
<keyword id="KW-0808">Transferase</keyword>
<keyword id="KW-0819">tRNA processing</keyword>
<name>MIAB_STAAR</name>
<evidence type="ECO:0000255" key="1">
    <source>
        <dbReference type="HAMAP-Rule" id="MF_01864"/>
    </source>
</evidence>
<evidence type="ECO:0000255" key="2">
    <source>
        <dbReference type="PROSITE-ProRule" id="PRU01266"/>
    </source>
</evidence>
<evidence type="ECO:0000256" key="3">
    <source>
        <dbReference type="SAM" id="MobiDB-lite"/>
    </source>
</evidence>
<sequence length="514" mass="58918">MNEEQRKASSVDVLAERDKKAEKDYSKYFEHVYQPPNLKEAKKRGKQEVRYNRDFQIDEKYRGMGNERTFLIKTYGCQMNAHDTEVIAGILEALGYQATTDINTADVILINTCAIRENAENKVFSEIGNLKHLKKERPDILIGVCGCMSQEESVVNKILKSYQNVDMIFGTHNIHHLPEILEEAYLSKAMVVEVWSKEGDVIENLPKVREGNIKAWVNIMYGCDKFCTYCIVPFTRGKERSRRPEDIIDEVRELAREGYKEITLLGQNVNSYGKDLQDIEYDLGDLLQAISKIAIPRVRFTTSHPWDFTDHMIDVISEGGNIVPHIHLPVQSGNNAVLKIMGRKYTRESYLDLVKRIKDRIPNVALTTDIIVGYPNESEEQFEETLTLYDEVGFEHAYTYLYSQRDGTPAAKMKDNVPLDVKKERLQRLNKKVGHYSQIAMSKYEGQTVTVLCEGSSKKDDQVLAGYTDKNKLVNFKAPKEMIGKLVEVRIDEAKQYSLNGSFVKEVEPEMVIQ</sequence>
<organism>
    <name type="scientific">Staphylococcus aureus (strain MRSA252)</name>
    <dbReference type="NCBI Taxonomy" id="282458"/>
    <lineage>
        <taxon>Bacteria</taxon>
        <taxon>Bacillati</taxon>
        <taxon>Bacillota</taxon>
        <taxon>Bacilli</taxon>
        <taxon>Bacillales</taxon>
        <taxon>Staphylococcaceae</taxon>
        <taxon>Staphylococcus</taxon>
    </lineage>
</organism>
<proteinExistence type="inferred from homology"/>
<gene>
    <name evidence="1" type="primary">miaB</name>
    <name type="ordered locus">SAR1268</name>
</gene>
<protein>
    <recommendedName>
        <fullName evidence="1">tRNA-2-methylthio-N(6)-dimethylallyladenosine synthase</fullName>
        <ecNumber evidence="1">2.8.4.3</ecNumber>
    </recommendedName>
    <alternativeName>
        <fullName evidence="1">(Dimethylallyl)adenosine tRNA methylthiotransferase MiaB</fullName>
    </alternativeName>
    <alternativeName>
        <fullName evidence="1">tRNA-i(6)A37 methylthiotransferase</fullName>
    </alternativeName>
</protein>
<comment type="function">
    <text evidence="1">Catalyzes the methylthiolation of N6-(dimethylallyl)adenosine (i(6)A), leading to the formation of 2-methylthio-N6-(dimethylallyl)adenosine (ms(2)i(6)A) at position 37 in tRNAs that read codons beginning with uridine.</text>
</comment>
<comment type="catalytic activity">
    <reaction evidence="1">
        <text>N(6)-dimethylallyladenosine(37) in tRNA + (sulfur carrier)-SH + AH2 + 2 S-adenosyl-L-methionine = 2-methylsulfanyl-N(6)-dimethylallyladenosine(37) in tRNA + (sulfur carrier)-H + 5'-deoxyadenosine + L-methionine + A + S-adenosyl-L-homocysteine + 2 H(+)</text>
        <dbReference type="Rhea" id="RHEA:37067"/>
        <dbReference type="Rhea" id="RHEA-COMP:10375"/>
        <dbReference type="Rhea" id="RHEA-COMP:10376"/>
        <dbReference type="Rhea" id="RHEA-COMP:14737"/>
        <dbReference type="Rhea" id="RHEA-COMP:14739"/>
        <dbReference type="ChEBI" id="CHEBI:13193"/>
        <dbReference type="ChEBI" id="CHEBI:15378"/>
        <dbReference type="ChEBI" id="CHEBI:17319"/>
        <dbReference type="ChEBI" id="CHEBI:17499"/>
        <dbReference type="ChEBI" id="CHEBI:29917"/>
        <dbReference type="ChEBI" id="CHEBI:57844"/>
        <dbReference type="ChEBI" id="CHEBI:57856"/>
        <dbReference type="ChEBI" id="CHEBI:59789"/>
        <dbReference type="ChEBI" id="CHEBI:64428"/>
        <dbReference type="ChEBI" id="CHEBI:74415"/>
        <dbReference type="ChEBI" id="CHEBI:74417"/>
        <dbReference type="EC" id="2.8.4.3"/>
    </reaction>
</comment>
<comment type="cofactor">
    <cofactor evidence="1">
        <name>[4Fe-4S] cluster</name>
        <dbReference type="ChEBI" id="CHEBI:49883"/>
    </cofactor>
    <text evidence="1">Binds 2 [4Fe-4S] clusters. One cluster is coordinated with 3 cysteines and an exchangeable S-adenosyl-L-methionine.</text>
</comment>
<comment type="subunit">
    <text evidence="1">Monomer.</text>
</comment>
<comment type="subcellular location">
    <subcellularLocation>
        <location evidence="1">Cytoplasm</location>
    </subcellularLocation>
</comment>
<comment type="similarity">
    <text evidence="1">Belongs to the methylthiotransferase family. MiaB subfamily.</text>
</comment>
<accession>Q6GHE3</accession>
<feature type="chain" id="PRO_0000374568" description="tRNA-2-methylthio-N(6)-dimethylallyladenosine synthase">
    <location>
        <begin position="1"/>
        <end position="514"/>
    </location>
</feature>
<feature type="domain" description="MTTase N-terminal" evidence="1">
    <location>
        <begin position="68"/>
        <end position="186"/>
    </location>
</feature>
<feature type="domain" description="Radical SAM core" evidence="2">
    <location>
        <begin position="209"/>
        <end position="440"/>
    </location>
</feature>
<feature type="domain" description="TRAM" evidence="1">
    <location>
        <begin position="442"/>
        <end position="505"/>
    </location>
</feature>
<feature type="region of interest" description="Disordered" evidence="3">
    <location>
        <begin position="1"/>
        <end position="21"/>
    </location>
</feature>
<feature type="binding site" evidence="1">
    <location>
        <position position="77"/>
    </location>
    <ligand>
        <name>[4Fe-4S] cluster</name>
        <dbReference type="ChEBI" id="CHEBI:49883"/>
        <label>1</label>
    </ligand>
</feature>
<feature type="binding site" evidence="1">
    <location>
        <position position="113"/>
    </location>
    <ligand>
        <name>[4Fe-4S] cluster</name>
        <dbReference type="ChEBI" id="CHEBI:49883"/>
        <label>1</label>
    </ligand>
</feature>
<feature type="binding site" evidence="1">
    <location>
        <position position="147"/>
    </location>
    <ligand>
        <name>[4Fe-4S] cluster</name>
        <dbReference type="ChEBI" id="CHEBI:49883"/>
        <label>1</label>
    </ligand>
</feature>
<feature type="binding site" evidence="1">
    <location>
        <position position="223"/>
    </location>
    <ligand>
        <name>[4Fe-4S] cluster</name>
        <dbReference type="ChEBI" id="CHEBI:49883"/>
        <label>2</label>
        <note>4Fe-4S-S-AdoMet</note>
    </ligand>
</feature>
<feature type="binding site" evidence="1">
    <location>
        <position position="227"/>
    </location>
    <ligand>
        <name>[4Fe-4S] cluster</name>
        <dbReference type="ChEBI" id="CHEBI:49883"/>
        <label>2</label>
        <note>4Fe-4S-S-AdoMet</note>
    </ligand>
</feature>
<feature type="binding site" evidence="1">
    <location>
        <position position="230"/>
    </location>
    <ligand>
        <name>[4Fe-4S] cluster</name>
        <dbReference type="ChEBI" id="CHEBI:49883"/>
        <label>2</label>
        <note>4Fe-4S-S-AdoMet</note>
    </ligand>
</feature>